<comment type="function">
    <text evidence="1">DNA ligase that catalyzes the formation of phosphodiester linkages between 5'-phosphoryl and 3'-hydroxyl groups in double-stranded DNA using NAD as a coenzyme and as the energy source for the reaction. It is essential for DNA replication and repair of damaged DNA.</text>
</comment>
<comment type="catalytic activity">
    <reaction evidence="1">
        <text>NAD(+) + (deoxyribonucleotide)n-3'-hydroxyl + 5'-phospho-(deoxyribonucleotide)m = (deoxyribonucleotide)n+m + AMP + beta-nicotinamide D-nucleotide.</text>
        <dbReference type="EC" id="6.5.1.2"/>
    </reaction>
</comment>
<comment type="cofactor">
    <cofactor evidence="1">
        <name>Mg(2+)</name>
        <dbReference type="ChEBI" id="CHEBI:18420"/>
    </cofactor>
    <cofactor evidence="1">
        <name>Mn(2+)</name>
        <dbReference type="ChEBI" id="CHEBI:29035"/>
    </cofactor>
</comment>
<comment type="similarity">
    <text evidence="1">Belongs to the NAD-dependent DNA ligase family. LigA subfamily.</text>
</comment>
<organism>
    <name type="scientific">Lactobacillus delbrueckii subsp. bulgaricus (strain ATCC 11842 / DSM 20081 / BCRC 10696 / JCM 1002 / NBRC 13953 / NCIMB 11778 / NCTC 12712 / WDCM 00102 / Lb 14)</name>
    <dbReference type="NCBI Taxonomy" id="390333"/>
    <lineage>
        <taxon>Bacteria</taxon>
        <taxon>Bacillati</taxon>
        <taxon>Bacillota</taxon>
        <taxon>Bacilli</taxon>
        <taxon>Lactobacillales</taxon>
        <taxon>Lactobacillaceae</taxon>
        <taxon>Lactobacillus</taxon>
    </lineage>
</organism>
<proteinExistence type="inferred from homology"/>
<sequence>MAESLEEAKQEVRQLRAQLDQWAKAYYEQDAPVVEDHVYDEKYARLLELEAAYPELKSADSITQRVGGEVNSDLPKVEHPVPMLSMGDVFSKEELAEFDQRVQKAIGHPVAYNVELKIDGLSLSLEYEEGCLKRASTRGNGQVGEDVTKNVKYIKDVPQKLPKAITTEVRGECYMSKEAFAKLNQERDEAGESIFANPRNAAAGSLRQLDPKVTKKRQLSTFIYTWINPPAGIDSQHQAICEMAKLGFHTNENGRRLENLADVYDYIDEFTKKRDSLPYVIDGIVLKVDDLALQADLGNTVKVPRWEIAYKFPPEEEETVVREIEWTVGRTGVVTPTAVMDPVRLAGSTVARASLHNPDLLAKLDVRLGDTVKLHKAGDIIPEISEVVLSKRPEDSVPYEVPTKCPSCGEDLVHLDEEVALRCINPSCPAQVEEGITHFASRQAMNIAGLGPKIVKQLIAKDLVHNVADLYYLTADDLSQLDHFKEKSINNLLVAIDQSRKNSVELVLFGLGIDNVGGKAAQLIARKFKNMSKIASASVQELTAIDTIGMTIAESLTAYFQQEEAKKLLARLEEAGVNMDYLGEDGEAADNFFKGKTVVLTGKLAHYSRAEFTKKLQALGAKVTGSVSKKTNCLVYGEDAGSKLAKAEALDIPRLTEAEAISKIEEKDTEK</sequence>
<reference key="1">
    <citation type="journal article" date="2006" name="Proc. Natl. Acad. Sci. U.S.A.">
        <title>The complete genome sequence of Lactobacillus bulgaricus reveals extensive and ongoing reductive evolution.</title>
        <authorList>
            <person name="van de Guchte M."/>
            <person name="Penaud S."/>
            <person name="Grimaldi C."/>
            <person name="Barbe V."/>
            <person name="Bryson K."/>
            <person name="Nicolas P."/>
            <person name="Robert C."/>
            <person name="Oztas S."/>
            <person name="Mangenot S."/>
            <person name="Couloux A."/>
            <person name="Loux V."/>
            <person name="Dervyn R."/>
            <person name="Bossy R."/>
            <person name="Bolotin A."/>
            <person name="Batto J.-M."/>
            <person name="Walunas T."/>
            <person name="Gibrat J.-F."/>
            <person name="Bessieres P."/>
            <person name="Weissenbach J."/>
            <person name="Ehrlich S.D."/>
            <person name="Maguin E."/>
        </authorList>
    </citation>
    <scope>NUCLEOTIDE SEQUENCE [LARGE SCALE GENOMIC DNA]</scope>
    <source>
        <strain>ATCC 11842 / DSM 20081 / BCRC 10696 / JCM 1002 / NBRC 13953 / NCIMB 11778 / NCTC 12712 / WDCM 00102 / Lb 14</strain>
    </source>
</reference>
<evidence type="ECO:0000255" key="1">
    <source>
        <dbReference type="HAMAP-Rule" id="MF_01588"/>
    </source>
</evidence>
<name>DNLJ_LACDA</name>
<feature type="chain" id="PRO_0000313274" description="DNA ligase">
    <location>
        <begin position="1"/>
        <end position="671"/>
    </location>
</feature>
<feature type="domain" description="BRCT" evidence="1">
    <location>
        <begin position="588"/>
        <end position="671"/>
    </location>
</feature>
<feature type="active site" description="N6-AMP-lysine intermediate" evidence="1">
    <location>
        <position position="117"/>
    </location>
</feature>
<feature type="binding site" evidence="1">
    <location>
        <begin position="36"/>
        <end position="40"/>
    </location>
    <ligand>
        <name>NAD(+)</name>
        <dbReference type="ChEBI" id="CHEBI:57540"/>
    </ligand>
</feature>
<feature type="binding site" evidence="1">
    <location>
        <begin position="85"/>
        <end position="86"/>
    </location>
    <ligand>
        <name>NAD(+)</name>
        <dbReference type="ChEBI" id="CHEBI:57540"/>
    </ligand>
</feature>
<feature type="binding site" evidence="1">
    <location>
        <position position="115"/>
    </location>
    <ligand>
        <name>NAD(+)</name>
        <dbReference type="ChEBI" id="CHEBI:57540"/>
    </ligand>
</feature>
<feature type="binding site" evidence="1">
    <location>
        <position position="138"/>
    </location>
    <ligand>
        <name>NAD(+)</name>
        <dbReference type="ChEBI" id="CHEBI:57540"/>
    </ligand>
</feature>
<feature type="binding site" evidence="1">
    <location>
        <position position="172"/>
    </location>
    <ligand>
        <name>NAD(+)</name>
        <dbReference type="ChEBI" id="CHEBI:57540"/>
    </ligand>
</feature>
<feature type="binding site" evidence="1">
    <location>
        <position position="287"/>
    </location>
    <ligand>
        <name>NAD(+)</name>
        <dbReference type="ChEBI" id="CHEBI:57540"/>
    </ligand>
</feature>
<feature type="binding site" evidence="1">
    <location>
        <position position="311"/>
    </location>
    <ligand>
        <name>NAD(+)</name>
        <dbReference type="ChEBI" id="CHEBI:57540"/>
    </ligand>
</feature>
<feature type="binding site" evidence="1">
    <location>
        <position position="405"/>
    </location>
    <ligand>
        <name>Zn(2+)</name>
        <dbReference type="ChEBI" id="CHEBI:29105"/>
    </ligand>
</feature>
<feature type="binding site" evidence="1">
    <location>
        <position position="408"/>
    </location>
    <ligand>
        <name>Zn(2+)</name>
        <dbReference type="ChEBI" id="CHEBI:29105"/>
    </ligand>
</feature>
<feature type="binding site" evidence="1">
    <location>
        <position position="423"/>
    </location>
    <ligand>
        <name>Zn(2+)</name>
        <dbReference type="ChEBI" id="CHEBI:29105"/>
    </ligand>
</feature>
<feature type="binding site" evidence="1">
    <location>
        <position position="428"/>
    </location>
    <ligand>
        <name>Zn(2+)</name>
        <dbReference type="ChEBI" id="CHEBI:29105"/>
    </ligand>
</feature>
<gene>
    <name evidence="1" type="primary">ligA</name>
    <name type="ordered locus">Ldb0466</name>
</gene>
<protein>
    <recommendedName>
        <fullName evidence="1">DNA ligase</fullName>
        <ecNumber evidence="1">6.5.1.2</ecNumber>
    </recommendedName>
    <alternativeName>
        <fullName evidence="1">Polydeoxyribonucleotide synthase [NAD(+)]</fullName>
    </alternativeName>
</protein>
<accession>Q1GBF7</accession>
<keyword id="KW-0227">DNA damage</keyword>
<keyword id="KW-0234">DNA repair</keyword>
<keyword id="KW-0235">DNA replication</keyword>
<keyword id="KW-0436">Ligase</keyword>
<keyword id="KW-0460">Magnesium</keyword>
<keyword id="KW-0464">Manganese</keyword>
<keyword id="KW-0479">Metal-binding</keyword>
<keyword id="KW-0520">NAD</keyword>
<keyword id="KW-1185">Reference proteome</keyword>
<keyword id="KW-0862">Zinc</keyword>
<dbReference type="EC" id="6.5.1.2" evidence="1"/>
<dbReference type="EMBL" id="CR954253">
    <property type="protein sequence ID" value="CAI97297.1"/>
    <property type="molecule type" value="Genomic_DNA"/>
</dbReference>
<dbReference type="RefSeq" id="WP_011543665.1">
    <property type="nucleotide sequence ID" value="NC_008054.1"/>
</dbReference>
<dbReference type="SMR" id="Q1GBF7"/>
<dbReference type="STRING" id="390333.Ldb0466"/>
<dbReference type="KEGG" id="ldb:Ldb0466"/>
<dbReference type="PATRIC" id="fig|390333.13.peg.329"/>
<dbReference type="eggNOG" id="COG0272">
    <property type="taxonomic scope" value="Bacteria"/>
</dbReference>
<dbReference type="HOGENOM" id="CLU_007764_2_1_9"/>
<dbReference type="BioCyc" id="LDEL390333:LDB_RS01985-MONOMER"/>
<dbReference type="Proteomes" id="UP000001259">
    <property type="component" value="Chromosome"/>
</dbReference>
<dbReference type="GO" id="GO:0005829">
    <property type="term" value="C:cytosol"/>
    <property type="evidence" value="ECO:0007669"/>
    <property type="project" value="TreeGrafter"/>
</dbReference>
<dbReference type="GO" id="GO:0003677">
    <property type="term" value="F:DNA binding"/>
    <property type="evidence" value="ECO:0007669"/>
    <property type="project" value="InterPro"/>
</dbReference>
<dbReference type="GO" id="GO:0003911">
    <property type="term" value="F:DNA ligase (NAD+) activity"/>
    <property type="evidence" value="ECO:0007669"/>
    <property type="project" value="UniProtKB-UniRule"/>
</dbReference>
<dbReference type="GO" id="GO:0046872">
    <property type="term" value="F:metal ion binding"/>
    <property type="evidence" value="ECO:0007669"/>
    <property type="project" value="UniProtKB-KW"/>
</dbReference>
<dbReference type="GO" id="GO:0006281">
    <property type="term" value="P:DNA repair"/>
    <property type="evidence" value="ECO:0007669"/>
    <property type="project" value="UniProtKB-KW"/>
</dbReference>
<dbReference type="GO" id="GO:0006260">
    <property type="term" value="P:DNA replication"/>
    <property type="evidence" value="ECO:0007669"/>
    <property type="project" value="UniProtKB-KW"/>
</dbReference>
<dbReference type="CDD" id="cd17748">
    <property type="entry name" value="BRCT_DNA_ligase_like"/>
    <property type="match status" value="1"/>
</dbReference>
<dbReference type="CDD" id="cd00114">
    <property type="entry name" value="LIGANc"/>
    <property type="match status" value="1"/>
</dbReference>
<dbReference type="FunFam" id="1.10.150.20:FF:000007">
    <property type="entry name" value="DNA ligase"/>
    <property type="match status" value="1"/>
</dbReference>
<dbReference type="FunFam" id="2.40.50.140:FF:000012">
    <property type="entry name" value="DNA ligase"/>
    <property type="match status" value="1"/>
</dbReference>
<dbReference type="FunFam" id="3.30.470.30:FF:000001">
    <property type="entry name" value="DNA ligase"/>
    <property type="match status" value="1"/>
</dbReference>
<dbReference type="Gene3D" id="6.20.10.30">
    <property type="match status" value="1"/>
</dbReference>
<dbReference type="Gene3D" id="1.10.150.20">
    <property type="entry name" value="5' to 3' exonuclease, C-terminal subdomain"/>
    <property type="match status" value="2"/>
</dbReference>
<dbReference type="Gene3D" id="3.40.50.10190">
    <property type="entry name" value="BRCT domain"/>
    <property type="match status" value="1"/>
</dbReference>
<dbReference type="Gene3D" id="3.30.470.30">
    <property type="entry name" value="DNA ligase/mRNA capping enzyme"/>
    <property type="match status" value="1"/>
</dbReference>
<dbReference type="Gene3D" id="1.10.287.610">
    <property type="entry name" value="Helix hairpin bin"/>
    <property type="match status" value="1"/>
</dbReference>
<dbReference type="Gene3D" id="2.40.50.140">
    <property type="entry name" value="Nucleic acid-binding proteins"/>
    <property type="match status" value="1"/>
</dbReference>
<dbReference type="HAMAP" id="MF_01588">
    <property type="entry name" value="DNA_ligase_A"/>
    <property type="match status" value="1"/>
</dbReference>
<dbReference type="InterPro" id="IPR001357">
    <property type="entry name" value="BRCT_dom"/>
</dbReference>
<dbReference type="InterPro" id="IPR036420">
    <property type="entry name" value="BRCT_dom_sf"/>
</dbReference>
<dbReference type="InterPro" id="IPR041663">
    <property type="entry name" value="DisA/LigA_HHH"/>
</dbReference>
<dbReference type="InterPro" id="IPR001679">
    <property type="entry name" value="DNA_ligase"/>
</dbReference>
<dbReference type="InterPro" id="IPR018239">
    <property type="entry name" value="DNA_ligase_AS"/>
</dbReference>
<dbReference type="InterPro" id="IPR033136">
    <property type="entry name" value="DNA_ligase_CS"/>
</dbReference>
<dbReference type="InterPro" id="IPR013839">
    <property type="entry name" value="DNAligase_adenylation"/>
</dbReference>
<dbReference type="InterPro" id="IPR013840">
    <property type="entry name" value="DNAligase_N"/>
</dbReference>
<dbReference type="InterPro" id="IPR003583">
    <property type="entry name" value="Hlx-hairpin-Hlx_DNA-bd_motif"/>
</dbReference>
<dbReference type="InterPro" id="IPR012340">
    <property type="entry name" value="NA-bd_OB-fold"/>
</dbReference>
<dbReference type="InterPro" id="IPR004150">
    <property type="entry name" value="NAD_DNA_ligase_OB"/>
</dbReference>
<dbReference type="InterPro" id="IPR010994">
    <property type="entry name" value="RuvA_2-like"/>
</dbReference>
<dbReference type="InterPro" id="IPR004149">
    <property type="entry name" value="Znf_DNAligase_C4"/>
</dbReference>
<dbReference type="NCBIfam" id="TIGR00575">
    <property type="entry name" value="dnlj"/>
    <property type="match status" value="1"/>
</dbReference>
<dbReference type="NCBIfam" id="NF005932">
    <property type="entry name" value="PRK07956.1"/>
    <property type="match status" value="1"/>
</dbReference>
<dbReference type="PANTHER" id="PTHR23389">
    <property type="entry name" value="CHROMOSOME TRANSMISSION FIDELITY FACTOR 18"/>
    <property type="match status" value="1"/>
</dbReference>
<dbReference type="PANTHER" id="PTHR23389:SF9">
    <property type="entry name" value="DNA LIGASE"/>
    <property type="match status" value="1"/>
</dbReference>
<dbReference type="Pfam" id="PF00533">
    <property type="entry name" value="BRCT"/>
    <property type="match status" value="1"/>
</dbReference>
<dbReference type="Pfam" id="PF01653">
    <property type="entry name" value="DNA_ligase_aden"/>
    <property type="match status" value="1"/>
</dbReference>
<dbReference type="Pfam" id="PF03120">
    <property type="entry name" value="DNA_ligase_OB"/>
    <property type="match status" value="1"/>
</dbReference>
<dbReference type="Pfam" id="PF03119">
    <property type="entry name" value="DNA_ligase_ZBD"/>
    <property type="match status" value="1"/>
</dbReference>
<dbReference type="Pfam" id="PF12826">
    <property type="entry name" value="HHH_2"/>
    <property type="match status" value="1"/>
</dbReference>
<dbReference type="PIRSF" id="PIRSF001604">
    <property type="entry name" value="LigA"/>
    <property type="match status" value="1"/>
</dbReference>
<dbReference type="SMART" id="SM00292">
    <property type="entry name" value="BRCT"/>
    <property type="match status" value="1"/>
</dbReference>
<dbReference type="SMART" id="SM00278">
    <property type="entry name" value="HhH1"/>
    <property type="match status" value="3"/>
</dbReference>
<dbReference type="SMART" id="SM00532">
    <property type="entry name" value="LIGANc"/>
    <property type="match status" value="1"/>
</dbReference>
<dbReference type="SUPFAM" id="SSF52113">
    <property type="entry name" value="BRCT domain"/>
    <property type="match status" value="1"/>
</dbReference>
<dbReference type="SUPFAM" id="SSF56091">
    <property type="entry name" value="DNA ligase/mRNA capping enzyme, catalytic domain"/>
    <property type="match status" value="1"/>
</dbReference>
<dbReference type="SUPFAM" id="SSF50249">
    <property type="entry name" value="Nucleic acid-binding proteins"/>
    <property type="match status" value="1"/>
</dbReference>
<dbReference type="SUPFAM" id="SSF47781">
    <property type="entry name" value="RuvA domain 2-like"/>
    <property type="match status" value="1"/>
</dbReference>
<dbReference type="PROSITE" id="PS50172">
    <property type="entry name" value="BRCT"/>
    <property type="match status" value="1"/>
</dbReference>
<dbReference type="PROSITE" id="PS01055">
    <property type="entry name" value="DNA_LIGASE_N1"/>
    <property type="match status" value="1"/>
</dbReference>
<dbReference type="PROSITE" id="PS01056">
    <property type="entry name" value="DNA_LIGASE_N2"/>
    <property type="match status" value="1"/>
</dbReference>